<feature type="chain" id="PRO_0000460168" description="Genome polyprotein">
    <location>
        <begin position="1"/>
        <end position="1687"/>
    </location>
</feature>
<feature type="chain" id="PRO_0000460169" description="NS1-2" evidence="3">
    <location>
        <begin position="1"/>
        <end position="341"/>
    </location>
</feature>
<feature type="chain" id="PRO_0000460170" description="NS1">
    <location>
        <begin position="1"/>
        <end position="121"/>
    </location>
</feature>
<feature type="chain" id="PRO_0000460171" description="NS2">
    <location>
        <begin position="132"/>
        <end position="341"/>
    </location>
</feature>
<feature type="chain" id="PRO_0000460172" description="NTPase">
    <location>
        <begin position="342"/>
        <end position="705"/>
    </location>
</feature>
<feature type="chain" id="PRO_0000460173" description="NS4">
    <location>
        <begin position="706"/>
        <end position="870"/>
    </location>
</feature>
<feature type="chain" id="PRO_0000460174" description="Viral genome-linked protein">
    <location>
        <begin position="871"/>
        <end position="994"/>
    </location>
</feature>
<feature type="chain" id="PRO_0000460175" description="3C-like protease">
    <location>
        <begin position="995"/>
        <end position="1177"/>
    </location>
</feature>
<feature type="chain" id="PRO_0000460176" description="RNA-directed RNA polymerase">
    <location>
        <begin position="1178"/>
        <end position="1687"/>
    </location>
</feature>
<feature type="domain" description="SF3 helicase" evidence="6">
    <location>
        <begin position="476"/>
        <end position="641"/>
    </location>
</feature>
<feature type="domain" description="Peptidase C37" evidence="7">
    <location>
        <begin position="995"/>
        <end position="1172"/>
    </location>
</feature>
<feature type="domain" description="RdRp catalytic" evidence="5">
    <location>
        <begin position="1416"/>
        <end position="1537"/>
    </location>
</feature>
<feature type="region of interest" description="Interaction with host MAP1LC3A/LC3" evidence="2">
    <location>
        <begin position="1"/>
        <end position="116"/>
    </location>
</feature>
<feature type="region of interest" description="Disordered" evidence="8">
    <location>
        <begin position="1"/>
        <end position="56"/>
    </location>
</feature>
<feature type="region of interest" description="Interaction with NTPase" evidence="2">
    <location>
        <begin position="117"/>
        <end position="341"/>
    </location>
</feature>
<feature type="region of interest" description="Interaction with NS4" evidence="2">
    <location>
        <begin position="244"/>
        <end position="341"/>
    </location>
</feature>
<feature type="region of interest" description="Host ER membrane association" evidence="2">
    <location>
        <begin position="261"/>
        <end position="292"/>
    </location>
</feature>
<feature type="region of interest" description="Host ER membrane association" evidence="39">
    <location>
        <begin position="302"/>
        <end position="341"/>
    </location>
</feature>
<feature type="region of interest" description="Interaction with NS1-2, NS4 and homooligomerization" evidence="2">
    <location>
        <begin position="342"/>
        <end position="518"/>
    </location>
</feature>
<feature type="region of interest" description="Important for mitochondrion targeting" evidence="2">
    <location>
        <begin position="595"/>
        <end position="700"/>
    </location>
</feature>
<feature type="region of interest" description="Acidic" evidence="18">
    <location>
        <begin position="893"/>
        <end position="898"/>
    </location>
</feature>
<feature type="region of interest" description="Interaction with host EIF4G" evidence="2">
    <location>
        <begin position="978"/>
        <end position="994"/>
    </location>
</feature>
<feature type="compositionally biased region" description="Polar residues" evidence="8">
    <location>
        <begin position="1"/>
        <end position="13"/>
    </location>
</feature>
<feature type="active site" description="For 3CLpro activity" evidence="7">
    <location>
        <position position="1024"/>
    </location>
</feature>
<feature type="active site" description="For 3CLpro activity" evidence="35">
    <location>
        <position position="1048"/>
    </location>
</feature>
<feature type="active site" description="For 3CLpro activity" evidence="7">
    <location>
        <position position="1133"/>
    </location>
</feature>
<feature type="binding site" evidence="6">
    <location>
        <begin position="504"/>
        <end position="511"/>
    </location>
    <ligand>
        <name>ATP</name>
        <dbReference type="ChEBI" id="CHEBI:30616"/>
    </ligand>
</feature>
<feature type="binding site" evidence="13 14 20">
    <location>
        <position position="1420"/>
    </location>
    <ligand>
        <name>Mg(2+)</name>
        <dbReference type="ChEBI" id="CHEBI:18420"/>
        <note>catalytic; for RNA-directed RNA polymerase activity</note>
    </ligand>
</feature>
<feature type="binding site" evidence="13">
    <location>
        <position position="1422"/>
    </location>
    <ligand>
        <name>Mg(2+)</name>
        <dbReference type="ChEBI" id="CHEBI:18420"/>
        <note>catalytic; for RNA-directed RNA polymerase activity</note>
    </ligand>
</feature>
<feature type="binding site" evidence="13 20">
    <location>
        <position position="1524"/>
    </location>
    <ligand>
        <name>Mg(2+)</name>
        <dbReference type="ChEBI" id="CHEBI:18420"/>
        <note>catalytic; for RNA-directed RNA polymerase activity</note>
    </ligand>
</feature>
<feature type="binding site" evidence="13 14 20">
    <location>
        <position position="1525"/>
    </location>
    <ligand>
        <name>Mg(2+)</name>
        <dbReference type="ChEBI" id="CHEBI:18420"/>
        <note>catalytic; for RNA-directed RNA polymerase activity</note>
    </ligand>
</feature>
<feature type="binding site" evidence="14 20">
    <location>
        <position position="1569"/>
    </location>
    <ligand>
        <name>Mg(2+)</name>
        <dbReference type="ChEBI" id="CHEBI:18420"/>
        <note>catalytic; for RNA-directed RNA polymerase activity</note>
    </ligand>
</feature>
<feature type="site" description="Critical for determining viral persistence" evidence="17 19">
    <location>
        <position position="94"/>
    </location>
</feature>
<feature type="site" description="Cleavage; by host CASP3" evidence="10 30">
    <location>
        <begin position="121"/>
        <end position="122"/>
    </location>
</feature>
<feature type="site" description="Cleavage; by host CASP3" evidence="10 30">
    <location>
        <begin position="131"/>
        <end position="132"/>
    </location>
</feature>
<feature type="site" description="Cleavage; by 3CLpro" evidence="10 23">
    <location>
        <begin position="341"/>
        <end position="342"/>
    </location>
</feature>
<feature type="site" description="Cleavage; by 3CLpro" evidence="10 23">
    <location>
        <begin position="705"/>
        <end position="706"/>
    </location>
</feature>
<feature type="site" description="Cleavage; by 3CLpro" evidence="10 23">
    <location>
        <begin position="870"/>
        <end position="871"/>
    </location>
</feature>
<feature type="site" description="Cleavage; by 3CLpro" evidence="10 23">
    <location>
        <begin position="994"/>
        <end position="995"/>
    </location>
</feature>
<feature type="site" description="Cleavage; by 3CLpro" evidence="10 23">
    <location>
        <begin position="1177"/>
        <end position="1178"/>
    </location>
</feature>
<feature type="modified residue" description="O-(5'-phospho-RNA)-tyrosine" evidence="25">
    <location>
        <position position="896"/>
    </location>
</feature>
<feature type="disulfide bond" evidence="16 20 21">
    <location>
        <begin position="1482"/>
        <end position="1484"/>
    </location>
</feature>
<feature type="sequence variant" description="In strain: CW3.">
    <original>R</original>
    <variation>H</variation>
    <location>
        <position position="845"/>
    </location>
</feature>
<feature type="mutagenesis site" description="Changes the stability of NS1-2 and induces viral persistance." evidence="19">
    <original>D</original>
    <variation>E</variation>
    <location>
        <position position="94"/>
    </location>
</feature>
<feature type="mutagenesis site" description="Complete loss of NS1-2 cleavage; when associted with G-131." evidence="30">
    <original>D</original>
    <variation>G</variation>
    <location>
        <position position="121"/>
    </location>
</feature>
<feature type="mutagenesis site" description="Almost complete loss of NS1-2 cleavage; when associted with G-121." evidence="30">
    <original>D</original>
    <variation>G</variation>
    <location>
        <position position="131"/>
    </location>
</feature>
<feature type="mutagenesis site" description="Reduced virus replication." evidence="22">
    <original>V</original>
    <variation>A</variation>
    <location>
        <position position="985"/>
    </location>
</feature>
<feature type="mutagenesis site" description="Reduced virus replication." evidence="22">
    <original>D</original>
    <variation>A</variation>
    <location>
        <position position="986"/>
    </location>
</feature>
<feature type="mutagenesis site" description="Reduced interaction with host EIF4G and complete loss of production of virions." evidence="22 32">
    <original>F</original>
    <variation>A</variation>
    <location>
        <position position="993"/>
    </location>
</feature>
<feature type="mutagenesis site" description="Almost complete loss of RNA-directed RNA polymerase." evidence="13">
    <original>D</original>
    <variation>A</variation>
    <location>
        <position position="1422"/>
    </location>
</feature>
<feature type="mutagenesis site" description="Complete loss of oligomerization of RdRp in the presence of VPg and RNA. Decreased interaction of VPg with RdRp. No production of infectious particles." evidence="27">
    <original>D</original>
    <variation>A</variation>
    <location>
        <position position="1508"/>
    </location>
</feature>
<feature type="mutagenesis site" description="Almost complete loss of RNA-directed RNA polymerase." evidence="13">
    <original>D</original>
    <variation>A</variation>
    <location>
        <position position="1523"/>
    </location>
</feature>
<feature type="mutagenesis site" description="Almost complete loss of RNA-directed RNA polymerase." evidence="13">
    <original>D</original>
    <variation>A</variation>
    <location>
        <position position="1524"/>
    </location>
</feature>
<feature type="mutagenesis site" description="Complete loss of oligomerization of RdRp in the presence of VPg and RNA. Decreased interaction of VPg with RdRp. No production of infectious particles." evidence="27">
    <original>L</original>
    <variation>D</variation>
    <location>
        <position position="1531"/>
    </location>
</feature>
<feature type="sequence conflict" description="In Ref. 1; AAO63098." evidence="38" ref="1">
    <original>I</original>
    <variation>V</variation>
    <location>
        <position position="716"/>
    </location>
</feature>
<feature type="turn" evidence="59">
    <location>
        <begin position="43"/>
        <end position="45"/>
    </location>
</feature>
<feature type="helix" evidence="59">
    <location>
        <begin position="67"/>
        <end position="69"/>
    </location>
</feature>
<feature type="strand" evidence="59">
    <location>
        <begin position="73"/>
        <end position="75"/>
    </location>
</feature>
<feature type="helix" evidence="59">
    <location>
        <begin position="76"/>
        <end position="93"/>
    </location>
</feature>
<feature type="helix" evidence="59">
    <location>
        <begin position="103"/>
        <end position="109"/>
    </location>
</feature>
<feature type="helix" evidence="58">
    <location>
        <begin position="893"/>
        <end position="905"/>
    </location>
</feature>
<feature type="turn" evidence="58">
    <location>
        <begin position="906"/>
        <end position="908"/>
    </location>
</feature>
<feature type="helix" evidence="58">
    <location>
        <begin position="912"/>
        <end position="922"/>
    </location>
</feature>
<feature type="strand" evidence="58">
    <location>
        <begin position="925"/>
        <end position="929"/>
    </location>
</feature>
<feature type="strand" evidence="58">
    <location>
        <begin position="935"/>
        <end position="937"/>
    </location>
</feature>
<feature type="helix" evidence="58">
    <location>
        <begin position="940"/>
        <end position="942"/>
    </location>
</feature>
<feature type="helix" evidence="65">
    <location>
        <begin position="997"/>
        <end position="1002"/>
    </location>
</feature>
<feature type="strand" evidence="65">
    <location>
        <begin position="1003"/>
        <end position="1006"/>
    </location>
</feature>
<feature type="strand" evidence="65">
    <location>
        <begin position="1009"/>
        <end position="1022"/>
    </location>
</feature>
<feature type="helix" evidence="65">
    <location>
        <begin position="1023"/>
        <end position="1025"/>
    </location>
</feature>
<feature type="strand" evidence="65">
    <location>
        <begin position="1040"/>
        <end position="1046"/>
    </location>
</feature>
<feature type="strand" evidence="65">
    <location>
        <begin position="1049"/>
        <end position="1056"/>
    </location>
</feature>
<feature type="strand" evidence="65">
    <location>
        <begin position="1076"/>
        <end position="1082"/>
    </location>
</feature>
<feature type="strand" evidence="65">
    <location>
        <begin position="1088"/>
        <end position="1103"/>
    </location>
</feature>
<feature type="strand" evidence="65">
    <location>
        <begin position="1106"/>
        <end position="1115"/>
    </location>
</feature>
<feature type="turn" evidence="67">
    <location>
        <begin position="1119"/>
        <end position="1125"/>
    </location>
</feature>
<feature type="helix" evidence="68">
    <location>
        <begin position="1130"/>
        <end position="1132"/>
    </location>
</feature>
<feature type="strand" evidence="65">
    <location>
        <begin position="1136"/>
        <end position="1141"/>
    </location>
</feature>
<feature type="strand" evidence="65">
    <location>
        <begin position="1144"/>
        <end position="1154"/>
    </location>
</feature>
<feature type="strand" evidence="65">
    <location>
        <begin position="1156"/>
        <end position="1164"/>
    </location>
</feature>
<feature type="helix" evidence="69">
    <location>
        <begin position="1173"/>
        <end position="1176"/>
    </location>
</feature>
<feature type="strand" evidence="64">
    <location>
        <begin position="1187"/>
        <end position="1189"/>
    </location>
</feature>
<feature type="strand" evidence="64">
    <location>
        <begin position="1192"/>
        <end position="1197"/>
    </location>
</feature>
<feature type="strand" evidence="64">
    <location>
        <begin position="1207"/>
        <end position="1215"/>
    </location>
</feature>
<feature type="helix" evidence="64">
    <location>
        <begin position="1239"/>
        <end position="1247"/>
    </location>
</feature>
<feature type="helix" evidence="64">
    <location>
        <begin position="1248"/>
        <end position="1251"/>
    </location>
</feature>
<feature type="helix" evidence="64">
    <location>
        <begin position="1260"/>
        <end position="1277"/>
    </location>
</feature>
<feature type="helix" evidence="64">
    <location>
        <begin position="1286"/>
        <end position="1292"/>
    </location>
</feature>
<feature type="strand" evidence="63">
    <location>
        <begin position="1295"/>
        <end position="1298"/>
    </location>
</feature>
<feature type="turn" evidence="64">
    <location>
        <begin position="1301"/>
        <end position="1303"/>
    </location>
</feature>
<feature type="helix" evidence="64">
    <location>
        <begin position="1307"/>
        <end position="1310"/>
    </location>
</feature>
<feature type="strand" evidence="64">
    <location>
        <begin position="1313"/>
        <end position="1316"/>
    </location>
</feature>
<feature type="helix" evidence="64">
    <location>
        <begin position="1318"/>
        <end position="1332"/>
    </location>
</feature>
<feature type="strand" evidence="64">
    <location>
        <begin position="1340"/>
        <end position="1345"/>
    </location>
</feature>
<feature type="helix" evidence="64">
    <location>
        <begin position="1353"/>
        <end position="1356"/>
    </location>
</feature>
<feature type="strand" evidence="64">
    <location>
        <begin position="1363"/>
        <end position="1366"/>
    </location>
</feature>
<feature type="helix" evidence="64">
    <location>
        <begin position="1369"/>
        <end position="1388"/>
    </location>
</feature>
<feature type="turn" evidence="64">
    <location>
        <begin position="1389"/>
        <end position="1392"/>
    </location>
</feature>
<feature type="strand" evidence="64">
    <location>
        <begin position="1393"/>
        <end position="1395"/>
    </location>
</feature>
<feature type="helix" evidence="64">
    <location>
        <begin position="1401"/>
        <end position="1412"/>
    </location>
</feature>
<feature type="strand" evidence="64">
    <location>
        <begin position="1415"/>
        <end position="1419"/>
    </location>
</feature>
<feature type="strand" evidence="66">
    <location>
        <begin position="1423"/>
        <end position="1425"/>
    </location>
</feature>
<feature type="helix" evidence="64">
    <location>
        <begin position="1427"/>
        <end position="1429"/>
    </location>
</feature>
<feature type="helix" evidence="64">
    <location>
        <begin position="1432"/>
        <end position="1444"/>
    </location>
</feature>
<feature type="strand" evidence="64">
    <location>
        <begin position="1446"/>
        <end position="1448"/>
    </location>
</feature>
<feature type="helix" evidence="64">
    <location>
        <begin position="1449"/>
        <end position="1460"/>
    </location>
</feature>
<feature type="strand" evidence="64">
    <location>
        <begin position="1463"/>
        <end position="1466"/>
    </location>
</feature>
<feature type="strand" evidence="64">
    <location>
        <begin position="1468"/>
        <end position="1474"/>
    </location>
</feature>
<feature type="helix" evidence="64">
    <location>
        <begin position="1484"/>
        <end position="1505"/>
    </location>
</feature>
<feature type="helix" evidence="64">
    <location>
        <begin position="1509"/>
        <end position="1514"/>
    </location>
</feature>
<feature type="strand" evidence="64">
    <location>
        <begin position="1516"/>
        <end position="1521"/>
    </location>
</feature>
<feature type="strand" evidence="64">
    <location>
        <begin position="1524"/>
        <end position="1531"/>
    </location>
</feature>
<feature type="helix" evidence="64">
    <location>
        <begin position="1535"/>
        <end position="1544"/>
    </location>
</feature>
<feature type="turn" evidence="60">
    <location>
        <begin position="1552"/>
        <end position="1554"/>
    </location>
</feature>
<feature type="strand" evidence="61">
    <location>
        <begin position="1556"/>
        <end position="1558"/>
    </location>
</feature>
<feature type="strand" evidence="60">
    <location>
        <begin position="1562"/>
        <end position="1564"/>
    </location>
</feature>
<feature type="strand" evidence="64">
    <location>
        <begin position="1573"/>
        <end position="1578"/>
    </location>
</feature>
<feature type="strand" evidence="64">
    <location>
        <begin position="1581"/>
        <end position="1585"/>
    </location>
</feature>
<feature type="helix" evidence="64">
    <location>
        <begin position="1588"/>
        <end position="1596"/>
    </location>
</feature>
<feature type="strand" evidence="64">
    <location>
        <begin position="1597"/>
        <end position="1604"/>
    </location>
</feature>
<feature type="helix" evidence="64">
    <location>
        <begin position="1617"/>
        <end position="1628"/>
    </location>
</feature>
<feature type="helix" evidence="64">
    <location>
        <begin position="1632"/>
        <end position="1645"/>
    </location>
</feature>
<feature type="strand" evidence="61">
    <location>
        <begin position="1648"/>
        <end position="1651"/>
    </location>
</feature>
<feature type="helix" evidence="64">
    <location>
        <begin position="1658"/>
        <end position="1666"/>
    </location>
</feature>
<feature type="strand" evidence="62">
    <location>
        <begin position="1669"/>
        <end position="1673"/>
    </location>
</feature>
<evidence type="ECO:0000250" key="1">
    <source>
        <dbReference type="UniProtKB" id="P27409"/>
    </source>
</evidence>
<evidence type="ECO:0000250" key="2">
    <source>
        <dbReference type="UniProtKB" id="P54634"/>
    </source>
</evidence>
<evidence type="ECO:0000250" key="3">
    <source>
        <dbReference type="UniProtKB" id="Q83883"/>
    </source>
</evidence>
<evidence type="ECO:0000250" key="4">
    <source>
        <dbReference type="UniProtKB" id="Q86119"/>
    </source>
</evidence>
<evidence type="ECO:0000255" key="5">
    <source>
        <dbReference type="PROSITE-ProRule" id="PRU00539"/>
    </source>
</evidence>
<evidence type="ECO:0000255" key="6">
    <source>
        <dbReference type="PROSITE-ProRule" id="PRU00551"/>
    </source>
</evidence>
<evidence type="ECO:0000255" key="7">
    <source>
        <dbReference type="PROSITE-ProRule" id="PRU00870"/>
    </source>
</evidence>
<evidence type="ECO:0000256" key="8">
    <source>
        <dbReference type="SAM" id="MobiDB-lite"/>
    </source>
</evidence>
<evidence type="ECO:0000269" key="9">
    <source>
    </source>
</evidence>
<evidence type="ECO:0000269" key="10">
    <source>
    </source>
</evidence>
<evidence type="ECO:0000269" key="11">
    <source>
    </source>
</evidence>
<evidence type="ECO:0000269" key="12">
    <source>
    </source>
</evidence>
<evidence type="ECO:0000269" key="13">
    <source>
    </source>
</evidence>
<evidence type="ECO:0000269" key="14">
    <source>
    </source>
</evidence>
<evidence type="ECO:0000269" key="15">
    <source>
    </source>
</evidence>
<evidence type="ECO:0000269" key="16">
    <source>
    </source>
</evidence>
<evidence type="ECO:0000269" key="17">
    <source>
    </source>
</evidence>
<evidence type="ECO:0000269" key="18">
    <source>
    </source>
</evidence>
<evidence type="ECO:0000269" key="19">
    <source>
    </source>
</evidence>
<evidence type="ECO:0000269" key="20">
    <source>
    </source>
</evidence>
<evidence type="ECO:0000269" key="21">
    <source>
    </source>
</evidence>
<evidence type="ECO:0000269" key="22">
    <source>
    </source>
</evidence>
<evidence type="ECO:0000269" key="23">
    <source>
    </source>
</evidence>
<evidence type="ECO:0000269" key="24">
    <source>
    </source>
</evidence>
<evidence type="ECO:0000269" key="25">
    <source>
    </source>
</evidence>
<evidence type="ECO:0000269" key="26">
    <source>
    </source>
</evidence>
<evidence type="ECO:0000269" key="27">
    <source>
    </source>
</evidence>
<evidence type="ECO:0000269" key="28">
    <source>
    </source>
</evidence>
<evidence type="ECO:0000269" key="29">
    <source>
    </source>
</evidence>
<evidence type="ECO:0000269" key="30">
    <source>
    </source>
</evidence>
<evidence type="ECO:0000269" key="31">
    <source>
    </source>
</evidence>
<evidence type="ECO:0000269" key="32">
    <source>
    </source>
</evidence>
<evidence type="ECO:0000269" key="33">
    <source>
    </source>
</evidence>
<evidence type="ECO:0000269" key="34">
    <source>
    </source>
</evidence>
<evidence type="ECO:0000303" key="35">
    <source>
    </source>
</evidence>
<evidence type="ECO:0000303" key="36">
    <source>
    </source>
</evidence>
<evidence type="ECO:0000303" key="37">
    <source>
    </source>
</evidence>
<evidence type="ECO:0000305" key="38"/>
<evidence type="ECO:0000305" key="39">
    <source>
    </source>
</evidence>
<evidence type="ECO:0000305" key="40">
    <source>
    </source>
</evidence>
<evidence type="ECO:0000305" key="41">
    <source>
    </source>
</evidence>
<evidence type="ECO:0007744" key="42">
    <source>
        <dbReference type="PDB" id="2M4G"/>
    </source>
</evidence>
<evidence type="ECO:0007744" key="43">
    <source>
        <dbReference type="PDB" id="2MCD"/>
    </source>
</evidence>
<evidence type="ECO:0007744" key="44">
    <source>
        <dbReference type="PDB" id="2MCH"/>
    </source>
</evidence>
<evidence type="ECO:0007744" key="45">
    <source>
        <dbReference type="PDB" id="3NAI"/>
    </source>
</evidence>
<evidence type="ECO:0007744" key="46">
    <source>
        <dbReference type="PDB" id="3QID"/>
    </source>
</evidence>
<evidence type="ECO:0007744" key="47">
    <source>
        <dbReference type="PDB" id="3SFG"/>
    </source>
</evidence>
<evidence type="ECO:0007744" key="48">
    <source>
        <dbReference type="PDB" id="3SFU"/>
    </source>
</evidence>
<evidence type="ECO:0007744" key="49">
    <source>
        <dbReference type="PDB" id="3UPF"/>
    </source>
</evidence>
<evidence type="ECO:0007744" key="50">
    <source>
        <dbReference type="PDB" id="3UQS"/>
    </source>
</evidence>
<evidence type="ECO:0007744" key="51">
    <source>
        <dbReference type="PDB" id="3UR0"/>
    </source>
</evidence>
<evidence type="ECO:0007744" key="52">
    <source>
        <dbReference type="PDB" id="4ASH"/>
    </source>
</evidence>
<evidence type="ECO:0007744" key="53">
    <source>
        <dbReference type="PDB" id="4NRU"/>
    </source>
</evidence>
<evidence type="ECO:0007744" key="54">
    <source>
        <dbReference type="PDB" id="4O4R"/>
    </source>
</evidence>
<evidence type="ECO:0007744" key="55">
    <source>
        <dbReference type="PDB" id="4X2V"/>
    </source>
</evidence>
<evidence type="ECO:0007744" key="56">
    <source>
        <dbReference type="PDB" id="4X2W"/>
    </source>
</evidence>
<evidence type="ECO:0007744" key="57">
    <source>
        <dbReference type="PDB" id="5Y3D"/>
    </source>
</evidence>
<evidence type="ECO:0007829" key="58">
    <source>
        <dbReference type="PDB" id="2M4G"/>
    </source>
</evidence>
<evidence type="ECO:0007829" key="59">
    <source>
        <dbReference type="PDB" id="2MCD"/>
    </source>
</evidence>
<evidence type="ECO:0007829" key="60">
    <source>
        <dbReference type="PDB" id="3NAH"/>
    </source>
</evidence>
<evidence type="ECO:0007829" key="61">
    <source>
        <dbReference type="PDB" id="3NAI"/>
    </source>
</evidence>
<evidence type="ECO:0007829" key="62">
    <source>
        <dbReference type="PDB" id="3QID"/>
    </source>
</evidence>
<evidence type="ECO:0007829" key="63">
    <source>
        <dbReference type="PDB" id="3UPF"/>
    </source>
</evidence>
<evidence type="ECO:0007829" key="64">
    <source>
        <dbReference type="PDB" id="3UQS"/>
    </source>
</evidence>
<evidence type="ECO:0007829" key="65">
    <source>
        <dbReference type="PDB" id="4ASH"/>
    </source>
</evidence>
<evidence type="ECO:0007829" key="66">
    <source>
        <dbReference type="PDB" id="4O4R"/>
    </source>
</evidence>
<evidence type="ECO:0007829" key="67">
    <source>
        <dbReference type="PDB" id="4X2V"/>
    </source>
</evidence>
<evidence type="ECO:0007829" key="68">
    <source>
        <dbReference type="PDB" id="4X2X"/>
    </source>
</evidence>
<evidence type="ECO:0007829" key="69">
    <source>
        <dbReference type="PDB" id="8A5M"/>
    </source>
</evidence>
<sequence length="1687" mass="187557">MRMATPSSAPSVRNTEKRKNKKASSKASVSFGAPSPLSSESEDEINYMTPPEQEAQPGALAALHAEGPLAGLPVTRSDARVLIFNEWEERKKSDPWLRLDMSDKAIFRRYPHLRPKEDRPDAPSHAEDAMDAKEPVIGSILEQDDHKFYHYSVYIGGGLVMGVNNPSAAVCQATIDVEKLHLWWRPVWEPRHPLDSAELRKCVGMTVPYVATTVNCYQVCCWIVGIKDTWLKRAKISRDLPFYSPVQDWNVDPQEPFIPSKLRMVSDGILVALSAVIGRPIKNLLASVKPLNILNIVLSCDWTFSGIVNALILLAELFDIFWTPPDVTNWMISIFGEWQAEGPFDLALDVVPTLLGGIGMAFGLTSETIGRKLASTNSALKAAQEMGKFAIEVFKQIMAWIWPSEDPVPALLSNMEQAIIKNECQLENQLTAMLRDRNAGAEFLRSLDEEEQEVRKIAAKCGNSATTGTTNALLARISMARAAFEKARAEQTSRVRPVVIMVSGRPGIGKTCFCQNLAKRIAASLGDETSVGIIPRADVDHWDAYKGARVVLWDDFGMDNVVKDALRLQMLADTCPVTLNCDRIENKGKMFDSQVIIITTNQQTPVPLDYVNLEAVCRRIDFLVYAESPVVDDARARAPGDVNAVKAAMRPDYSHINFILAPQGGFDRQGNTPYGKGVTKIIGATALCARAVALVHERHDDFGLQNKVYDFDAGKITAFKAMAADAGIPWYKMAAIGCKAMGCTCVEEAMHLLKDYEVAPCQVIYNGATYNVSCIKGAPMVEKVKEPELPKTLVNCVRRIKEARLRCYCRMAADVITSILQAAGTAFSIYHQIEKRSRPSFYWDRGYTYRDGPGSFDIFEDDDDGWYHSEGKKGKNKKGRGRPGVFRTRGLTDEEYDEFKKRRESRGGKYSIDDYLADREREEELLERDEEEAIFGDGFGLKATRRSRKAERAKLGLVSGGDIRARKPIDWNVVGPSWADDDRQVDYGEKINFEAPVSIWSRVVQFGTGWGFWVSGHVFITAKHVAPPKGTEIFGRKPGDFTVTSSGDFLKYYFTSAVRPDIPAMVLENGCQEGVVASVLVKRASGEMLALAVRMGSQAAIKIGSAVVHGQTGMLLTGSNAKAQDLGTIPGDCGCPYVYKKGNTWVVIGVHVAATRSGNTVIAATHGEPTLEALEFQGPPMLPRPSGTYAGLPIADYGDAPPLSTKTMFWRTSPEKLPPGAWEPAYLGSKDERVDGPSLQQVMRDQLKPYSEPRGLLPPQEILDAVCDAIENRLENTLEPQKPWTFKKACESLDKNTSSGYPYHKQKSKDWTGSAFIGDLGDQATHANNMYEMGKSMRPIYTAALKDELVKPDKIYGKIKKRLLWGSDLGTMIRAARAFGPFCDALKETCIFNPIRVGMSMNEDGPFIFARHANFRYHMDADYTRWDSTQQRAILKRAGDIMVRLSPEPDLARVVMDDLLAPSLLDVGDYKIVVEEGLPSGCPCTTQLNSLAHWILTLCAMVEVTRVDPDIVMQESEFSFYGDDEVVSTNLELDMVKYTMALRRYGLLPTRADKEEGPLERRQTLQGISFLRRAIVGDQFGWYGRLDRASIDRQLLWTKGPNHQNPFETLPGHAQRPSQLMALLGEAAMHGEKYYRTVASRVSKEAAQSGIEMVVPRHRSVLRWVRFGTMDAETPQERSAVFVNEDE</sequence>
<dbReference type="EC" id="3.6.1.15" evidence="28"/>
<dbReference type="EC" id="3.4.22.66" evidence="3"/>
<dbReference type="EC" id="2.7.7.48" evidence="13 14 16 20 21"/>
<dbReference type="EMBL" id="AY228235">
    <property type="protein sequence ID" value="AAO63098.2"/>
    <property type="status" value="ALT_SEQ"/>
    <property type="molecule type" value="Genomic_RNA"/>
</dbReference>
<dbReference type="EMBL" id="DQ285629">
    <property type="protein sequence ID" value="ABB90153.1"/>
    <property type="molecule type" value="Genomic_RNA"/>
</dbReference>
<dbReference type="EMBL" id="KC782764">
    <property type="protein sequence ID" value="AGO59889.1"/>
    <property type="molecule type" value="Genomic_RNA"/>
</dbReference>
<dbReference type="RefSeq" id="YP_720001.1">
    <property type="nucleotide sequence ID" value="NC_008311.1"/>
</dbReference>
<dbReference type="PDB" id="2M4G">
    <property type="method" value="NMR"/>
    <property type="chains" value="A=881-955"/>
</dbReference>
<dbReference type="PDB" id="2MCD">
    <property type="method" value="NMR"/>
    <property type="chains" value="A=28-114"/>
</dbReference>
<dbReference type="PDB" id="2MCH">
    <property type="method" value="NMR"/>
    <property type="chains" value="A=58-114"/>
</dbReference>
<dbReference type="PDB" id="3NAH">
    <property type="method" value="X-ray"/>
    <property type="resolution" value="2.75 A"/>
    <property type="chains" value="A/B/C=1181-1686"/>
</dbReference>
<dbReference type="PDB" id="3NAI">
    <property type="method" value="X-ray"/>
    <property type="resolution" value="2.56 A"/>
    <property type="chains" value="A/B/C=1181-1686"/>
</dbReference>
<dbReference type="PDB" id="3QID">
    <property type="method" value="X-ray"/>
    <property type="resolution" value="2.50 A"/>
    <property type="chains" value="A/B/C=1181-1686"/>
</dbReference>
<dbReference type="PDB" id="3SFG">
    <property type="method" value="X-ray"/>
    <property type="resolution" value="2.21 A"/>
    <property type="chains" value="A/B/C=1181-1686"/>
</dbReference>
<dbReference type="PDB" id="3SFU">
    <property type="method" value="X-ray"/>
    <property type="resolution" value="2.50 A"/>
    <property type="chains" value="A/B/C=1181-1686"/>
</dbReference>
<dbReference type="PDB" id="3UPF">
    <property type="method" value="X-ray"/>
    <property type="resolution" value="2.60 A"/>
    <property type="chains" value="A/B/C=1174-1687"/>
</dbReference>
<dbReference type="PDB" id="3UQS">
    <property type="method" value="X-ray"/>
    <property type="resolution" value="2.00 A"/>
    <property type="chains" value="A/B/C=1181-1687"/>
</dbReference>
<dbReference type="PDB" id="3UR0">
    <property type="method" value="X-ray"/>
    <property type="resolution" value="2.45 A"/>
    <property type="chains" value="A/B/C=1181-1687"/>
</dbReference>
<dbReference type="PDB" id="4ASH">
    <property type="method" value="X-ray"/>
    <property type="resolution" value="1.58 A"/>
    <property type="chains" value="A/B=995-1177"/>
</dbReference>
<dbReference type="PDB" id="4NRU">
    <property type="method" value="X-ray"/>
    <property type="resolution" value="2.30 A"/>
    <property type="chains" value="A/B/C/D/E/F=1181-1687"/>
</dbReference>
<dbReference type="PDB" id="4O4R">
    <property type="method" value="X-ray"/>
    <property type="resolution" value="2.40 A"/>
    <property type="chains" value="A/B/C=1181-1687"/>
</dbReference>
<dbReference type="PDB" id="4X2V">
    <property type="method" value="X-ray"/>
    <property type="resolution" value="2.30 A"/>
    <property type="chains" value="A/B/C/D=995-1178, E=1174-1178"/>
</dbReference>
<dbReference type="PDB" id="4X2W">
    <property type="method" value="X-ray"/>
    <property type="resolution" value="2.70 A"/>
    <property type="chains" value="A/B=997-1175"/>
</dbReference>
<dbReference type="PDB" id="4X2X">
    <property type="method" value="X-ray"/>
    <property type="resolution" value="2.47 A"/>
    <property type="chains" value="A=998-1173"/>
</dbReference>
<dbReference type="PDB" id="4X2Y">
    <property type="method" value="X-ray"/>
    <property type="resolution" value="2.42 A"/>
    <property type="chains" value="A/B=998-1173"/>
</dbReference>
<dbReference type="PDB" id="5Y3D">
    <property type="method" value="X-ray"/>
    <property type="resolution" value="3.14 A"/>
    <property type="chains" value="A/B/C/D/E/F=1181-1686"/>
</dbReference>
<dbReference type="PDB" id="8A5M">
    <property type="method" value="X-ray"/>
    <property type="resolution" value="2.92 A"/>
    <property type="chains" value="C/E=1171-1177"/>
</dbReference>
<dbReference type="PDB" id="8A8X">
    <property type="method" value="X-ray"/>
    <property type="resolution" value="2.37 A"/>
    <property type="chains" value="B/D=699-705"/>
</dbReference>
<dbReference type="PDBsum" id="2M4G"/>
<dbReference type="PDBsum" id="2MCD"/>
<dbReference type="PDBsum" id="2MCH"/>
<dbReference type="PDBsum" id="3NAH"/>
<dbReference type="PDBsum" id="3NAI"/>
<dbReference type="PDBsum" id="3QID"/>
<dbReference type="PDBsum" id="3SFG"/>
<dbReference type="PDBsum" id="3SFU"/>
<dbReference type="PDBsum" id="3UPF"/>
<dbReference type="PDBsum" id="3UQS"/>
<dbReference type="PDBsum" id="3UR0"/>
<dbReference type="PDBsum" id="4ASH"/>
<dbReference type="PDBsum" id="4NRU"/>
<dbReference type="PDBsum" id="4O4R"/>
<dbReference type="PDBsum" id="4X2V"/>
<dbReference type="PDBsum" id="4X2W"/>
<dbReference type="PDBsum" id="4X2X"/>
<dbReference type="PDBsum" id="4X2Y"/>
<dbReference type="PDBsum" id="5Y3D"/>
<dbReference type="PDBsum" id="8A5M"/>
<dbReference type="PDBsum" id="8A8X"/>
<dbReference type="SMR" id="Q80J95"/>
<dbReference type="BindingDB" id="Q80J95"/>
<dbReference type="MEROPS" id="C37.003"/>
<dbReference type="GeneID" id="4246735"/>
<dbReference type="KEGG" id="vg:4246735"/>
<dbReference type="BRENDA" id="2.7.7.48">
    <property type="organism ID" value="11649"/>
</dbReference>
<dbReference type="EvolutionaryTrace" id="Q80J95"/>
<dbReference type="Proteomes" id="UP000109015">
    <property type="component" value="Genome"/>
</dbReference>
<dbReference type="Proteomes" id="UP000179396">
    <property type="component" value="Genome"/>
</dbReference>
<dbReference type="Proteomes" id="UP000179407">
    <property type="component" value="Genome"/>
</dbReference>
<dbReference type="GO" id="GO:0005576">
    <property type="term" value="C:extracellular region"/>
    <property type="evidence" value="ECO:0007669"/>
    <property type="project" value="UniProtKB-SubCell"/>
</dbReference>
<dbReference type="GO" id="GO:0044167">
    <property type="term" value="C:host cell endoplasmic reticulum membrane"/>
    <property type="evidence" value="ECO:0007669"/>
    <property type="project" value="UniProtKB-SubCell"/>
</dbReference>
<dbReference type="GO" id="GO:0044175">
    <property type="term" value="C:host cell endosome membrane"/>
    <property type="evidence" value="ECO:0007669"/>
    <property type="project" value="UniProtKB-SubCell"/>
</dbReference>
<dbReference type="GO" id="GO:0033650">
    <property type="term" value="C:host cell mitochondrion"/>
    <property type="evidence" value="ECO:0007669"/>
    <property type="project" value="UniProtKB-SubCell"/>
</dbReference>
<dbReference type="GO" id="GO:0044220">
    <property type="term" value="C:host cell perinuclear region of cytoplasm"/>
    <property type="evidence" value="ECO:0007669"/>
    <property type="project" value="UniProtKB-SubCell"/>
</dbReference>
<dbReference type="GO" id="GO:0016020">
    <property type="term" value="C:membrane"/>
    <property type="evidence" value="ECO:0007669"/>
    <property type="project" value="UniProtKB-KW"/>
</dbReference>
<dbReference type="GO" id="GO:0005524">
    <property type="term" value="F:ATP binding"/>
    <property type="evidence" value="ECO:0007669"/>
    <property type="project" value="UniProtKB-KW"/>
</dbReference>
<dbReference type="GO" id="GO:0004197">
    <property type="term" value="F:cysteine-type endopeptidase activity"/>
    <property type="evidence" value="ECO:0007669"/>
    <property type="project" value="InterPro"/>
</dbReference>
<dbReference type="GO" id="GO:0046872">
    <property type="term" value="F:metal ion binding"/>
    <property type="evidence" value="ECO:0007669"/>
    <property type="project" value="UniProtKB-KW"/>
</dbReference>
<dbReference type="GO" id="GO:0017111">
    <property type="term" value="F:ribonucleoside triphosphate phosphatase activity"/>
    <property type="evidence" value="ECO:0007669"/>
    <property type="project" value="UniProtKB-EC"/>
</dbReference>
<dbReference type="GO" id="GO:0003723">
    <property type="term" value="F:RNA binding"/>
    <property type="evidence" value="ECO:0007669"/>
    <property type="project" value="InterPro"/>
</dbReference>
<dbReference type="GO" id="GO:0003724">
    <property type="term" value="F:RNA helicase activity"/>
    <property type="evidence" value="ECO:0007669"/>
    <property type="project" value="InterPro"/>
</dbReference>
<dbReference type="GO" id="GO:0003968">
    <property type="term" value="F:RNA-directed RNA polymerase activity"/>
    <property type="evidence" value="ECO:0007669"/>
    <property type="project" value="UniProtKB-KW"/>
</dbReference>
<dbReference type="GO" id="GO:0006351">
    <property type="term" value="P:DNA-templated transcription"/>
    <property type="evidence" value="ECO:0007669"/>
    <property type="project" value="InterPro"/>
</dbReference>
<dbReference type="GO" id="GO:0006508">
    <property type="term" value="P:proteolysis"/>
    <property type="evidence" value="ECO:0007669"/>
    <property type="project" value="UniProtKB-KW"/>
</dbReference>
<dbReference type="GO" id="GO:0039694">
    <property type="term" value="P:viral RNA genome replication"/>
    <property type="evidence" value="ECO:0007669"/>
    <property type="project" value="InterPro"/>
</dbReference>
<dbReference type="CDD" id="cd23192">
    <property type="entry name" value="Caliciviridae_RdRp"/>
    <property type="match status" value="1"/>
</dbReference>
<dbReference type="Gene3D" id="1.20.960.20">
    <property type="match status" value="1"/>
</dbReference>
<dbReference type="Gene3D" id="3.30.70.270">
    <property type="match status" value="2"/>
</dbReference>
<dbReference type="Gene3D" id="6.10.20.70">
    <property type="match status" value="1"/>
</dbReference>
<dbReference type="Gene3D" id="6.10.250.3230">
    <property type="match status" value="1"/>
</dbReference>
<dbReference type="Gene3D" id="3.40.50.300">
    <property type="entry name" value="P-loop containing nucleotide triphosphate hydrolases"/>
    <property type="match status" value="1"/>
</dbReference>
<dbReference type="Gene3D" id="2.40.10.10">
    <property type="entry name" value="Trypsin-like serine proteases"/>
    <property type="match status" value="2"/>
</dbReference>
<dbReference type="InterPro" id="IPR043502">
    <property type="entry name" value="DNA/RNA_pol_sf"/>
</dbReference>
<dbReference type="InterPro" id="IPR000605">
    <property type="entry name" value="Helicase_SF3_ssDNA/RNA_vir"/>
</dbReference>
<dbReference type="InterPro" id="IPR014759">
    <property type="entry name" value="Helicase_SF3_ssRNA_vir"/>
</dbReference>
<dbReference type="InterPro" id="IPR001665">
    <property type="entry name" value="Norovirus_pept_C37"/>
</dbReference>
<dbReference type="InterPro" id="IPR027417">
    <property type="entry name" value="P-loop_NTPase"/>
</dbReference>
<dbReference type="InterPro" id="IPR009003">
    <property type="entry name" value="Peptidase_S1_PA"/>
</dbReference>
<dbReference type="InterPro" id="IPR043504">
    <property type="entry name" value="Peptidase_S1_PA_chymotrypsin"/>
</dbReference>
<dbReference type="InterPro" id="IPR043128">
    <property type="entry name" value="Rev_trsase/Diguanyl_cyclase"/>
</dbReference>
<dbReference type="InterPro" id="IPR001205">
    <property type="entry name" value="RNA-dir_pol_C"/>
</dbReference>
<dbReference type="InterPro" id="IPR007094">
    <property type="entry name" value="RNA-dir_pol_PSvirus"/>
</dbReference>
<dbReference type="InterPro" id="IPR013614">
    <property type="entry name" value="Viral_PP_Calicivir_N"/>
</dbReference>
<dbReference type="Pfam" id="PF08405">
    <property type="entry name" value="Calici_PP_N"/>
    <property type="match status" value="1"/>
</dbReference>
<dbReference type="Pfam" id="PF05416">
    <property type="entry name" value="Peptidase_C37"/>
    <property type="match status" value="1"/>
</dbReference>
<dbReference type="Pfam" id="PF00680">
    <property type="entry name" value="RdRP_1"/>
    <property type="match status" value="1"/>
</dbReference>
<dbReference type="Pfam" id="PF00910">
    <property type="entry name" value="RNA_helicase"/>
    <property type="match status" value="1"/>
</dbReference>
<dbReference type="PRINTS" id="PR00917">
    <property type="entry name" value="SRSVCYSPTASE"/>
</dbReference>
<dbReference type="SUPFAM" id="SSF56672">
    <property type="entry name" value="DNA/RNA polymerases"/>
    <property type="match status" value="1"/>
</dbReference>
<dbReference type="SUPFAM" id="SSF52540">
    <property type="entry name" value="P-loop containing nucleoside triphosphate hydrolases"/>
    <property type="match status" value="1"/>
</dbReference>
<dbReference type="SUPFAM" id="SSF50494">
    <property type="entry name" value="Trypsin-like serine proteases"/>
    <property type="match status" value="1"/>
</dbReference>
<dbReference type="PROSITE" id="PS51537">
    <property type="entry name" value="NV_3CL_PRO"/>
    <property type="match status" value="1"/>
</dbReference>
<dbReference type="PROSITE" id="PS50507">
    <property type="entry name" value="RDRP_SSRNA_POS"/>
    <property type="match status" value="1"/>
</dbReference>
<dbReference type="PROSITE" id="PS51218">
    <property type="entry name" value="SF3_HELICASE_2"/>
    <property type="match status" value="1"/>
</dbReference>
<comment type="function">
    <molecule>NS1-2</molecule>
    <text evidence="2 41">Induces the proliferation of the host smooth ER membranes forming long tubular structures (By similarity). These remodeled membranes probably form the viral factories that contain the replication complex (By similarity). May play a role in viral replication by interacting with host VAPA, a vesicle-associated membrane protein that plays a role in SNARE-mediated vesicle fusion. This interaction may target replication complex to intracellular membranes (Probable).</text>
</comment>
<comment type="function">
    <molecule>NS1</molecule>
    <text evidence="17 30 31">Promotes intestinal tropism and persistent fecal shedding in strain CR6 (PubMed:23077309, PubMed:31130511, PubMed:31329638). This function requires Glu-94 and is present in persistant strains (PubMed:23077309).</text>
</comment>
<comment type="function">
    <molecule>NTPase</molecule>
    <text evidence="2 28 33 34">Displays NTPase activity, but probably no helicase activity (PubMed:30265237). Displays RNA chaperone-like activity and destabilizes dsRNA (PubMed:30265237). Induces the formation of convoluted membranes derived from the host ER (By similarity). These remodeled membranes probably form the viral factories that contain the replication complex (By similarity). Initiates host cell death by targeting the mitochondrial outer membrane, leading to the permeabilization of mitochondria, programmed host cell death and viral egress (PubMed:36991121). Externalization of host cardiolipin seems to be involved in the process (PubMed:36991121). Probably plays a role in preventing the assembly of host stress granules (PubMed:31905230).</text>
</comment>
<comment type="function">
    <molecule>NS4</molecule>
    <text evidence="2">Probable key protein responsible for the formation of membrane alterations by the virus (By similarity). Induces the formation of convoluted membranes derived from the host ER (By similarity). These remodeled membranes probably form the viral factories that contain the replication complex (By similarity). May play a role in targeting replication complex to intracellular membranes.</text>
</comment>
<comment type="function">
    <molecule>Viral genome-linked protein</molecule>
    <text evidence="1 9 22 27">Viral genome-linked protein is covalently linked to the 5'-end of the positive-strand, negative-strand genomic RNAs and subgenomic RNA (By similarity). Acts as a genome-linked replication primer (By similarity). May recruit ribosome to viral RNA thereby promoting viral proteins translation (By similarity). Interacts with host translation initiation complex to allow the translation of viral proteins (PubMed:16835235, PubMed:24928504). Induces the formation of aggregates of RNA-directed RNA polymerase in the presence of RNA (PubMed:30038601). Through its interaction with the viral RNA-directed RNA polymerase, plays a crucial role in enhancing the polymerase activity (PubMed:30038601).</text>
</comment>
<comment type="function">
    <molecule>3C-like protease</molecule>
    <text evidence="23 24">Processes the polyprotein. 3CLpro-RdRp is first released by autocleavage, then all other proteins are cleaved (PubMed:26363064). May cleave host polyadenylate-binding protein thereby inhibiting cellular translation. Does not cleave host G3BP1 (PubMed:27147742).</text>
</comment>
<comment type="function">
    <molecule>RNA-directed RNA polymerase</molecule>
    <text evidence="4">Replicates genomic and antigenomic RNA by recognizing replications specific signals. Also transcribes a subgenomic mRNA by initiating RNA synthesis internally on antigenomic RNA. This sgRNA codes for structural proteins. Catalyzes the covalent attachment VPg with viral RNAs (By similarity).</text>
</comment>
<comment type="catalytic activity">
    <molecule>NTPase</molecule>
    <reaction evidence="28">
        <text>a ribonucleoside 5'-triphosphate + H2O = a ribonucleoside 5'-diphosphate + phosphate + H(+)</text>
        <dbReference type="Rhea" id="RHEA:23680"/>
        <dbReference type="ChEBI" id="CHEBI:15377"/>
        <dbReference type="ChEBI" id="CHEBI:15378"/>
        <dbReference type="ChEBI" id="CHEBI:43474"/>
        <dbReference type="ChEBI" id="CHEBI:57930"/>
        <dbReference type="ChEBI" id="CHEBI:61557"/>
        <dbReference type="EC" id="3.6.1.15"/>
    </reaction>
</comment>
<comment type="catalytic activity">
    <molecule>3C-like protease</molecule>
    <reaction evidence="38">
        <text>Endopeptidase with a preference for cleavage when the P1 position is occupied by Glu-|-Xaa and the P1' position is occupied by Gly-|-Yaa.</text>
        <dbReference type="EC" id="3.4.22.66"/>
    </reaction>
</comment>
<comment type="catalytic activity">
    <molecule>RNA-directed RNA polymerase</molecule>
    <reaction evidence="5 13 14 16 20 21">
        <text>RNA(n) + a ribonucleoside 5'-triphosphate = RNA(n+1) + diphosphate</text>
        <dbReference type="Rhea" id="RHEA:21248"/>
        <dbReference type="Rhea" id="RHEA-COMP:14527"/>
        <dbReference type="Rhea" id="RHEA-COMP:17342"/>
        <dbReference type="ChEBI" id="CHEBI:33019"/>
        <dbReference type="ChEBI" id="CHEBI:61557"/>
        <dbReference type="ChEBI" id="CHEBI:140395"/>
        <dbReference type="EC" id="2.7.7.48"/>
    </reaction>
</comment>
<comment type="cofactor">
    <molecule>NTPase</molecule>
    <cofactor evidence="28">
        <name>Mg(2+)</name>
        <dbReference type="ChEBI" id="CHEBI:18420"/>
    </cofactor>
</comment>
<comment type="cofactor">
    <molecule>RNA-directed RNA polymerase</molecule>
    <cofactor evidence="13">
        <name>Mg(2+)</name>
        <dbReference type="ChEBI" id="CHEBI:18420"/>
    </cofactor>
    <cofactor evidence="13">
        <name>Mn(2+)</name>
        <dbReference type="ChEBI" id="CHEBI:29035"/>
    </cofactor>
</comment>
<comment type="activity regulation">
    <molecule>RNA-directed RNA polymerase</molecule>
    <text evidence="16 20 21">Inhibited by Suramin, Suramin-related compounds and NF023 (PubMed:22446684, PubMed:24622391). Inhibited by PPNDS (PubMed:24657439).</text>
</comment>
<comment type="biophysicochemical properties">
    <molecule>NTPase</molecule>
    <phDependence>
        <text evidence="28">Optimum pH is 7-9.</text>
    </phDependence>
    <temperatureDependence>
        <text evidence="28">Optimum temperature is 37-45 degrees Celsius.</text>
    </temperatureDependence>
</comment>
<comment type="subunit">
    <molecule>NS1-2</molecule>
    <text evidence="2 15 26">Homodimer (PubMed:22347381). Interacts with NTPase; this interaction increases the proapoptotic activity of the NTPase and is crucial for the formation of the viral replication complex (By similarity). Interacts with NS4; this interaction is crucial for the formation of the viral replication complex (By similarity). Interacts (via N-terminus) with host VAPA (PubMed:28698274). Interacts with host VAPB (PubMed:28698274).</text>
</comment>
<comment type="subunit">
    <molecule>NS1</molecule>
    <text evidence="30">Monomer.</text>
</comment>
<comment type="subunit">
    <molecule>NTPase</molecule>
    <text evidence="2 28 33 34">Homooligomer (PubMed:30265237, PubMed:36991121). Interacts with NS1-2; this interaction increases the proapoptotic activity of the NTPase and is crucial for the formation of the viral replication complex (By similarity). Interacts with NS4; this interaction increases the proapoptotic activity of the NTPase (By similarity). Interacts with host G3BP1; this interaction leads to the redistribution of G3BP1 and its cellular partners to the viral replication complexes, thereby preventing the assembly of stress granules (PubMed:31905230).</text>
</comment>
<comment type="subunit">
    <molecule>3C-like protease</molecule>
    <text evidence="3">Homodimer (By similarity). Monomer; in solution (By similarity).</text>
</comment>
<comment type="subunit">
    <molecule>NS4</molecule>
    <text evidence="2">Interacts with NTPase; this interaction increases the proapoptotic activity of the NTPase (By similarity). Interacts with NS1-2; this interaction is crucial for the formation of the viral replication complex (By similarity).</text>
</comment>
<comment type="subunit">
    <molecule>Viral genome-linked protein</molecule>
    <text evidence="9 22 27 32">Monomer (PubMed:30038601). Interacts with the RNA-directed RNA polymerase; this interaction induces the multimerization of the RdRp and enhances its activity (PubMed:30038601). Interacts with host IEF4E; this interaction plays a role in translation of viral proteins (PubMed:16835235). Interacts (via C-terminus) with host IEF4G1 (via central domain); this interaction plays a role in translation of viral proteins (PubMed:24928504, PubMed:31403400).</text>
</comment>
<comment type="subunit">
    <molecule>RNA-directed RNA polymerase</molecule>
    <text evidence="27">Homohexamer; also forms fibrous hexameric oligomer (PubMed:30038601). Interacts with the viral genome-linked protein; this interaction induces the multimerization of the RdRp and enhances its activity (PubMed:30038601).</text>
</comment>
<comment type="subcellular location">
    <molecule>NS1-2</molecule>
    <subcellularLocation>
        <location evidence="12">Host endoplasmic reticulum membrane</location>
    </subcellularLocation>
</comment>
<comment type="subcellular location">
    <molecule>NS1</molecule>
    <subcellularLocation>
        <location evidence="30 31">Secreted</location>
    </subcellularLocation>
    <text evidence="30">Secreted through an unconventional CASP3-mediated mechanism.</text>
</comment>
<comment type="subcellular location">
    <molecule>NTPase</molecule>
    <subcellularLocation>
        <location evidence="2">Host endoplasmic reticulum membrane</location>
    </subcellularLocation>
</comment>
<comment type="subcellular location">
    <molecule>NS4</molecule>
    <subcellularLocation>
        <location evidence="11">Host endoplasmic reticulum membrane</location>
    </subcellularLocation>
    <subcellularLocation>
        <location evidence="12">Host endosome membrane</location>
    </subcellularLocation>
</comment>
<comment type="subcellular location">
    <molecule>3C-like protease</molecule>
    <subcellularLocation>
        <location evidence="12">Host mitochondrion</location>
    </subcellularLocation>
</comment>
<comment type="subcellular location">
    <molecule>RNA-directed RNA polymerase</molecule>
    <subcellularLocation>
        <location evidence="11">Host cytoplasm</location>
        <location evidence="11">Host perinuclear region</location>
    </subcellularLocation>
</comment>
<comment type="domain">
    <molecule>NS1-2</molecule>
    <text evidence="19">Contains a disordered region and a PEST-like domain in the N-terminus, a putative hydrolase in the central part, and probably a membrane-targeting domain in the C-terminus.</text>
</comment>
<comment type="domain">
    <molecule>NTPase</molecule>
    <text evidence="34">Contains a four-helix bundle domain (4HB) membrane-disruption domain in the N-terminus (PubMed:36991121). Contains a mitochondrial localization signal in the N-terminus (PubMed:36991121). The N-terminus is involved in host cell death and viral egress (PubMed:36991121).</text>
</comment>
<comment type="domain">
    <molecule>Viral genome-linked protein</molecule>
    <text evidence="18">Contains a compact core domain in the N-terminus half that is composed of a two-helix bundle.</text>
</comment>
<comment type="PTM">
    <molecule>Genome polyprotein</molecule>
    <text evidence="10 23 29">Specific enzymatic cleavages in vivo yield mature proteins (PubMed:16873239, PubMed:26363064). 3CLpro is first autocatalytically cleaved, then processes the whole polyprotein (PubMed:26363064, PubMed:30647130).</text>
</comment>
<comment type="PTM">
    <molecule>NS1-2</molecule>
    <text evidence="30 31">Cleaved by host CASP3/caspase 3 at 18-22 h.p.i (PubMed:31130511, PubMed:31329638). The cleavage allows NS1 secretion, which is essential for intestinal infection and resistance to IFN-lambda (PubMed:31130511).</text>
</comment>
<comment type="PTM">
    <molecule>Viral genome-linked protein</molecule>
    <text evidence="2 40">VPg is uridylylated by the polymerase and is covalently attached to the 5'-end of the polyadenylated genomic and subgenomic RNAs (Probable). This uridylylated form acts as a nucleotide-peptide primer for the polymerase (By similarity).</text>
</comment>
<comment type="miscellaneous">
    <text evidence="38">The sequence shown is that of clone CW1.</text>
</comment>
<comment type="miscellaneous">
    <text evidence="37">MNoV infects tuft intestinal cells that express the receptor CD300LF.</text>
</comment>
<comment type="caution">
    <text evidence="7">Lacks conserved residue(s) required for the propagation of feature annotation.</text>
</comment>
<comment type="sequence caution" evidence="38">
    <conflict type="miscellaneous discrepancy">
        <sequence resource="EMBL-CDS" id="AAO63098"/>
    </conflict>
</comment>
<reference key="1">
    <citation type="journal article" date="2003" name="Science">
        <title>STAT1-dependent innate immunity to a Norwalk-like virus.</title>
        <authorList>
            <person name="Karst S.M."/>
            <person name="Wobus C.E."/>
            <person name="Lay M."/>
            <person name="Davidson J."/>
            <person name="Virgin H.W."/>
        </authorList>
    </citation>
    <scope>NUCLEOTIDE SEQUENCE [GENOMIC DNA]</scope>
</reference>
<reference key="2">
    <citation type="journal article" date="2004" name="PLoS Biol.">
        <title>Replication of Norovirus in cell culture reveals a tropism for dendritic cells and macrophages.</title>
        <authorList>
            <person name="Wobus C.E."/>
            <person name="Karst S.M."/>
            <person name="Thackray L.B."/>
            <person name="Chang K.O."/>
            <person name="Sosnovtsev S.V."/>
            <person name="Belliot G."/>
            <person name="Krug A."/>
            <person name="Mackenzie J.M."/>
            <person name="Green K.Y."/>
            <person name="Virgin H.W."/>
        </authorList>
    </citation>
    <scope>NUCLEOTIDE SEQUENCE [GENOMIC DNA]</scope>
    <source>
        <strain evidence="38">CW1</strain>
    </source>
</reference>
<reference key="3">
    <citation type="journal article" date="2013" name="PLoS Pathog.">
        <title>Identification of Immune and Viral Correlates of Norovirus Protective Immunity through Comparative Study of Intra-Cluster Norovirus Strains.</title>
        <authorList>
            <person name="Zhu S."/>
            <person name="Regev D."/>
            <person name="Watanabe M."/>
            <person name="Hickman D."/>
            <person name="Moussatche N."/>
            <person name="Jesus D.M."/>
            <person name="Kahan S.M."/>
            <person name="Napthine S."/>
            <person name="Brierley I."/>
            <person name="Hunter R.N."/>
            <person name="Devabhaktuni D."/>
            <person name="Jones M.K."/>
            <person name="Karst S.M."/>
        </authorList>
    </citation>
    <scope>NUCLEOTIDE SEQUENCE [GENOMIC DNA]</scope>
    <source>
        <strain evidence="38">CW3</strain>
    </source>
</reference>
<reference key="4">
    <citation type="journal article" date="2006" name="J. Virol.">
        <title>Cleavage map and proteolytic processing of the murine norovirus nonstructural polyprotein in infected cells.</title>
        <authorList>
            <person name="Sosnovtsev S.V."/>
            <person name="Belliot G."/>
            <person name="Chang K.O."/>
            <person name="Prikhodko V.G."/>
            <person name="Thackray L.B."/>
            <person name="Wobus C.E."/>
            <person name="Karst S.M."/>
            <person name="Virgin H.W."/>
            <person name="Green K.Y."/>
        </authorList>
    </citation>
    <scope>PROTEIN SEQUENCE OF 706-714; 871-878 AND 1180-1187</scope>
    <scope>PROTEOLYTIC CLEAVAGE (GENOME POLYPROTEIN)</scope>
</reference>
<reference key="5">
    <citation type="journal article" date="2019" name="Cell Host Microbe">
        <title>A Secreted Viral Nonstructural Protein Determines Intestinal Norovirus Pathogenesis.</title>
        <authorList>
            <person name="Lee S."/>
            <person name="Liu H."/>
            <person name="Wilen C.B."/>
            <person name="Sychev Z.E."/>
            <person name="Desai C."/>
            <person name="Hykes B.L. Jr."/>
            <person name="Orchard R.C."/>
            <person name="McCune B.T."/>
            <person name="Kim K.W."/>
            <person name="Nice T.J."/>
            <person name="Handley S.A."/>
            <person name="Baldridge M.T."/>
            <person name="Amarasinghe G.K."/>
            <person name="Virgin H.W."/>
        </authorList>
    </citation>
    <scope>PROTEIN SEQUENCE OF 3-17 AND 81-104</scope>
    <scope>PROTEOLYTIC CLEAVAGE (NS1-2)</scope>
    <scope>FUNCTION (NS1)</scope>
    <scope>SUBCELLULAR LOCATION (NS1)</scope>
    <scope>MUTAGENESIS OF ASP-121 AND ASP-131</scope>
    <scope>SUBUNIT (NS1)</scope>
    <source>
        <strain>CR6</strain>
    </source>
</reference>
<reference key="6">
    <citation type="journal article" date="2006" name="J. Biol. Chem.">
        <title>Caliciviruses differ in their functional requirements for eIF4F components.</title>
        <authorList>
            <person name="Chaudhry Y."/>
            <person name="Nayak A."/>
            <person name="Bordeleau M.E."/>
            <person name="Tanaka J."/>
            <person name="Pelletier J."/>
            <person name="Belsham G.J."/>
            <person name="Roberts L.O."/>
            <person name="Goodfellow I.G."/>
        </authorList>
    </citation>
    <scope>FUNCTION (VIRAL GENOME-LINKED PROTEIN)</scope>
    <scope>INTERACTION WITH HOST EIF4E (VIRAL GENOME-LINKED PROTEIN)</scope>
</reference>
<reference key="7">
    <citation type="journal article" date="2009" name="J. Virol.">
        <title>Mouse norovirus replication is associated with virus-induced vesicle clusters originating from membranes derived from the secretory pathway.</title>
        <authorList>
            <person name="Hyde J.L."/>
            <person name="Sosnovtsev S.V."/>
            <person name="Green K.Y."/>
            <person name="Wobus C."/>
            <person name="Virgin H.W."/>
            <person name="Mackenzie J.M."/>
        </authorList>
    </citation>
    <scope>SUBCELLULAR LOCATION (RNA-DIRECTED RNA POLYMERASE)</scope>
</reference>
<reference key="8">
    <citation type="journal article" date="2010" name="Virology">
        <title>Subcellular localization of the MNV-1 ORF1 proteins and their potential roles in the formation of the MNV-1 replication complex.</title>
        <authorList>
            <person name="Hyde J.L."/>
            <person name="Mackenzie J.M."/>
        </authorList>
    </citation>
    <scope>SUBCELLULAR LOCATION (NS1-2)</scope>
    <scope>SUBCELLULAR LOCATION (NS4)</scope>
    <scope>SUBCELLULAR LOCATION (3C-LIKE PROTEASE)</scope>
</reference>
<reference key="9">
    <citation type="journal article" date="2012" name="PLoS ONE">
        <title>Inherent structural disorder and dimerisation of murine norovirus NS1-2 protein.</title>
        <authorList>
            <person name="Baker E.S."/>
            <person name="Luckner S.R."/>
            <person name="Krause K.L."/>
            <person name="Lambden P.R."/>
            <person name="Clarke I.N."/>
            <person name="Ward V.K."/>
        </authorList>
    </citation>
    <scope>SUBUNIT (NS1-2)</scope>
</reference>
<reference key="10">
    <citation type="journal article" date="2013" name="J. Virol.">
        <title>A single-amino-acid change in murine norovirus NS1/2 is sufficient for colonic tropism and persistence.</title>
        <authorList>
            <person name="Nice T.J."/>
            <person name="Strong D.W."/>
            <person name="McCune B.T."/>
            <person name="Pohl C.S."/>
            <person name="Virgin H.W."/>
        </authorList>
    </citation>
    <scope>FUNCTION (NS1)</scope>
    <source>
        <strain>CR6</strain>
        <strain>CW3</strain>
    </source>
</reference>
<reference key="11">
    <citation type="journal article" date="2014" name="J. Biol. Chem.">
        <title>Norovirus translation requires an interaction between the C Terminus of the genome-linked viral protein VPg and eukaryotic translation initiation factor 4G.</title>
        <authorList>
            <person name="Chung L."/>
            <person name="Bailey D."/>
            <person name="Leen E.N."/>
            <person name="Emmott E.P."/>
            <person name="Chaudhry Y."/>
            <person name="Roberts L.O."/>
            <person name="Curry S."/>
            <person name="Locker N."/>
            <person name="Goodfellow I.G."/>
        </authorList>
    </citation>
    <scope>FUNCTION (VIRAL GENOME-LINKED PROTEIN)</scope>
    <scope>INTERACTION WITH HOST EIF4G (VIRAL GENOME-LINKED PROTEIN)</scope>
    <scope>MUTAGENESIS OF VAL-985; ASP-986 AND PHE-993</scope>
</reference>
<reference key="12">
    <citation type="journal article" date="2015" name="J. Biol. Chem.">
        <title>A Cell-based Fluorescence Resonance Energy Transfer (FRET) Sensor Reveals Inter- and Intragenogroup Variations in Norovirus Protease Activity and Polyprotein Cleavage.</title>
        <authorList>
            <person name="Emmott E."/>
            <person name="Sweeney T.R."/>
            <person name="Goodfellow I."/>
        </authorList>
    </citation>
    <scope>FUNCTION (3C-LIKE PROTEASE)</scope>
    <scope>PROTEOLYTIC CLEAVAGE (GENOME POLYPROTEIN)</scope>
    <source>
        <strain>CW1</strain>
    </source>
</reference>
<reference key="13">
    <citation type="journal article" date="2016" name="J. Virol.">
        <title>Feline Calicivirus Infection Disrupts Assembly of Cytoplasmic Stress Granules and Induces G3BP1 Cleavage.</title>
        <authorList>
            <person name="Humoud M.N."/>
            <person name="Doyle N."/>
            <person name="Royall E."/>
            <person name="Willcocks M.M."/>
            <person name="Sorgeloos F."/>
            <person name="van Kuppeveld F."/>
            <person name="Roberts L.O."/>
            <person name="Goodfellow I.G."/>
            <person name="Langereis M.A."/>
            <person name="Locker N."/>
        </authorList>
    </citation>
    <scope>FUNCTION (3C-LIKE PROTEASE)</scope>
    <source>
        <strain>CW1</strain>
    </source>
</reference>
<reference key="14">
    <citation type="journal article" date="2016" name="PeerJ">
        <title>Protein-RNA linkage and posttranslational modifications of feline calicivirus and murine norovirus VPg proteins.</title>
        <authorList>
            <person name="Olspert A."/>
            <person name="Hosmillo M."/>
            <person name="Chaudhry Y."/>
            <person name="Peil L."/>
            <person name="Truve E."/>
            <person name="Goodfellow I."/>
        </authorList>
    </citation>
    <scope>COVALENT RNA LINKAGE AT TYR-896 (VIRAL GENOME-LINKED PROTEIN)</scope>
    <source>
        <strain>CW1</strain>
    </source>
</reference>
<reference key="15">
    <citation type="journal article" date="2017" name="MBio">
        <title>Noroviruses Co-opt the Function of Host Proteins VAPA and VAPB for Replication via a Phenylalanine-Phenylalanine-Acidic-Tract-Motif Mimic in Nonstructural Viral Protein NS1/2.</title>
        <authorList>
            <person name="McCune B.T."/>
            <person name="Tang W."/>
            <person name="Lu J."/>
            <person name="Eaglesham J.B."/>
            <person name="Thorne L."/>
            <person name="Mayer A.E."/>
            <person name="Condiff E."/>
            <person name="Nice T.J."/>
            <person name="Goodfellow I."/>
            <person name="Krezel A.M."/>
            <person name="Virgin H.W."/>
        </authorList>
    </citation>
    <scope>INTERACTION WITH HOST VAPA (NS1-2)</scope>
    <scope>INTERACTION WITH HOST VAPB (NS1-2)</scope>
    <scope>FUNCTION (NS1-2)</scope>
</reference>
<reference key="16">
    <citation type="journal article" date="2018" name="J. Gen. Virol.">
        <title>Nucleotide triphosphatase and RNA chaperone activities of murine norovirus NS3.</title>
        <authorList>
            <person name="Han K.R."/>
            <person name="Lee J.H."/>
            <person name="Kotiguda G.G."/>
            <person name="Jung K.H."/>
            <person name="Chung M.S."/>
            <person name="Kang S."/>
            <person name="Hwang S."/>
            <person name="Kim K.H."/>
        </authorList>
    </citation>
    <scope>SUBUNIT (NTPASE)</scope>
    <scope>CATALYTIC ACTIVITY (NTPASE)</scope>
    <scope>FUNCTION (NTPASE)</scope>
    <scope>COFACTOR (NTPASE)</scope>
    <scope>BIOPHYSICOCHEMICAL PROPERTIES (NTPASE)</scope>
</reference>
<reference key="17">
    <citation type="journal article" date="2019" name="PLoS Pathog.">
        <title>Caspase-mediated cleavage of murine norovirus NS1/2 potentiates apoptosis and is required for persistent infection of intestinal epithelial cells.</title>
        <authorList>
            <person name="Robinson B.A."/>
            <person name="Van Winkle J.A."/>
            <person name="McCune B.T."/>
            <person name="Peters A.M."/>
            <person name="Nice T.J."/>
        </authorList>
    </citation>
    <scope>PROTEOLYTIC CLEAVAGE (NS1-2)</scope>
    <scope>FUNCTION (NS1)</scope>
    <scope>SUBCELLULAR LOCATION (NS1)</scope>
    <source>
        <strain>CR6</strain>
    </source>
</reference>
<reference key="18">
    <citation type="journal article" date="2019" name="J. Biol. Chem.">
        <title>Polyprotein processing and intermolecular interactions within the viral replication complex spatially and temporally control norovirus protease activity.</title>
        <authorList>
            <person name="Emmott E."/>
            <person name="de Rougemont A."/>
            <person name="Hosmillo M."/>
            <person name="Lu J."/>
            <person name="Fitzmaurice T."/>
            <person name="Haas J."/>
            <person name="Goodfellow I."/>
        </authorList>
    </citation>
    <scope>PROTEOLYTIC CLEAVAGE (GENOME POLYPROTEIN)</scope>
</reference>
<reference key="19">
    <citation type="journal article" date="2019" name="Elife">
        <title>Noroviruses subvert the core stress granule component G3BP1 to promote viral VPg-dependent translation.</title>
        <authorList>
            <person name="Hosmillo M."/>
            <person name="Lu J."/>
            <person name="McAllaster M.R."/>
            <person name="Eaglesham J.B."/>
            <person name="Wang X."/>
            <person name="Emmott E."/>
            <person name="Domingues P."/>
            <person name="Chaudhry Y."/>
            <person name="Fitzmaurice T.J."/>
            <person name="Tung M.K."/>
            <person name="Panas M.D."/>
            <person name="McInerney G."/>
            <person name="Locker N."/>
            <person name="Wilen C.B."/>
            <person name="Goodfellow I.G."/>
        </authorList>
    </citation>
    <scope>INTERACTION WITH HOST EIF4G (VIRAL GENOME-LINKED PROTEIN)</scope>
    <scope>MUTAGENESIS OF PHE-993</scope>
</reference>
<reference key="20">
    <citation type="journal article" date="2020" name="PLoS Pathog.">
        <title>Norovirus infection results in eIF2alpha independent host translation shut-off and remodels the G3BP1 interactome evading stress granule formation.</title>
        <authorList>
            <person name="Brocard M."/>
            <person name="Iadevaia V."/>
            <person name="Klein P."/>
            <person name="Hall B."/>
            <person name="Lewis G."/>
            <person name="Lu J."/>
            <person name="Burke J."/>
            <person name="Willcocks M.M."/>
            <person name="Parker R."/>
            <person name="Goodfellow I.G."/>
            <person name="Ruggieri A."/>
            <person name="Locker N."/>
        </authorList>
    </citation>
    <scope>INTERACTION WITH HOST G3BP1 (NTPASE)</scope>
    <scope>FUNCTION (NTPASE)</scope>
</reference>
<reference key="21">
    <citation type="journal article" date="2021" name="Front. Microbiol.">
        <title>Calicivirus Non-structural Proteins: Potential Functions in Replication and Host Cell Manipulation.</title>
        <authorList>
            <person name="Smertina E."/>
            <person name="Hall R.N."/>
            <person name="Urakova N."/>
            <person name="Strive T."/>
            <person name="Frese M."/>
        </authorList>
    </citation>
    <scope>REVIEW</scope>
</reference>
<reference key="22">
    <citation type="journal article" date="2023" name="Nature">
        <title>Norovirus MLKL-like protein initiates cell death to induce viral egress.</title>
        <authorList>
            <person name="Wang G."/>
            <person name="Zhang D."/>
            <person name="Orchard R.C."/>
            <person name="Hancks D.C."/>
            <person name="Reese T.A."/>
        </authorList>
    </citation>
    <scope>FUNCTION (NTPASE)</scope>
    <scope>DOMAIN (NTPASE)</scope>
    <scope>SUBUNIT (NTPASE)</scope>
    <source>
        <strain>CR6</strain>
        <strain>CW3</strain>
    </source>
</reference>
<reference evidence="45 46" key="23">
    <citation type="journal article" date="2011" name="J. Gen. Virol.">
        <title>Crystal structures of murine norovirus-1 RNA-dependent RNA polymerase.</title>
        <authorList>
            <person name="Lee J.H."/>
            <person name="Alam I."/>
            <person name="Han K.R."/>
            <person name="Cho S."/>
            <person name="Shin S."/>
            <person name="Kang S."/>
            <person name="Yang J.M."/>
            <person name="Kim K.H."/>
        </authorList>
    </citation>
    <scope>X-RAY CRYSTALLOGRAPHY (2.50 ANGSTROMS) OF 1181-1686 IN COMPLEX WITH MAGNESIUM AND MANGANESE</scope>
    <scope>CATALYTIC ACTIVITY (RNA-DIRECTED RNA POLYMERASE)</scope>
    <scope>ACTIVE SITE (RNA-DIRECTED RNA POLYMERASE)</scope>
    <scope>MUTAGENESIS OF ASP-1422; ASP-1523 AND ASP-1524</scope>
    <scope>COFACTOR (RNA-DIRECTED RNA POLYMERASE)</scope>
</reference>
<reference evidence="49 50 51" key="24">
    <citation type="journal article" date="2012" name="J. Mol. Biol.">
        <title>Structure-based inhibition of Norovirus RNA-dependent RNA polymerases.</title>
        <authorList>
            <person name="Mastrangelo E."/>
            <person name="Pezzullo M."/>
            <person name="Tarantino D."/>
            <person name="Petazzi R."/>
            <person name="Germani F."/>
            <person name="Kramer D."/>
            <person name="Robel I."/>
            <person name="Rohayem J."/>
            <person name="Bolognesi M."/>
            <person name="Milani M."/>
        </authorList>
    </citation>
    <scope>X-RAY CRYSTALLOGRAPHY (2.00 ANGSTROMS) OF 1181-1687 IN COMPLEX WITH SURAMIN AND NF023</scope>
    <scope>DISULFIDE BONDS</scope>
    <scope>CATALYTIC ACTIVITY (RNA-DIRECTED RNA POLYMERASE)</scope>
    <scope>ACTIVITY REGULATION (RNA-DIRECTED RNA POLYMERASE)</scope>
</reference>
<reference evidence="52" key="25">
    <citation type="journal article" date="2012" name="PLoS ONE">
        <title>Structure of a murine norovirus NS6 protease-product complex revealed by adventitious crystallisation.</title>
        <authorList>
            <person name="Leen E.N."/>
            <person name="Baeza G."/>
            <person name="Curry S."/>
        </authorList>
    </citation>
    <scope>X-RAY CRYSTALLOGRAPHY (1.58 ANGSTROMS) OF 995-1177</scope>
</reference>
<reference evidence="47 48" key="26">
    <citation type="journal article" date="2012" name="Virology">
        <title>Crystal structures of murine norovirus-1 RNA-dependent RNA polymerase in complex with 2-thiouridine or ribavirin.</title>
        <authorList>
            <person name="Alam I."/>
            <person name="Lee J.H."/>
            <person name="Cho K.J."/>
            <person name="Han K.R."/>
            <person name="Yang J.M."/>
            <person name="Chung M.S."/>
            <person name="Kim K.H."/>
        </authorList>
    </citation>
    <scope>X-RAY CRYSTALLOGRAPHY (2.21 ANGSTROMS) OF 1181-1686 IN COMPLEX WITH MAGNESIUM</scope>
    <scope>CATALYTIC ACTIVITY (RNA-DIRECTED RNA POLYMERASE)</scope>
</reference>
<reference evidence="42" key="27">
    <citation type="journal article" date="2013" name="J. Virol.">
        <title>Structures of the compact helical core domains of feline calicivirus and murine norovirus VPg proteins.</title>
        <authorList>
            <person name="Leen E.N."/>
            <person name="Kwok K.Y."/>
            <person name="Birtley J.R."/>
            <person name="Simpson P.J."/>
            <person name="Subba-Reddy C.V."/>
            <person name="Chaudhry Y."/>
            <person name="Sosnovtsev S.V."/>
            <person name="Green K.Y."/>
            <person name="Prater S.N."/>
            <person name="Tong M."/>
            <person name="Young J.C."/>
            <person name="Chung L.M."/>
            <person name="Marchant J."/>
            <person name="Roberts L.O."/>
            <person name="Kao C.C."/>
            <person name="Matthews S."/>
            <person name="Goodfellow I.G."/>
            <person name="Curry S."/>
        </authorList>
    </citation>
    <scope>STRUCTURE BY NMR OF 881-955</scope>
    <scope>DOMAIN (VIRAL GENOME-LINKED PROTEIN)</scope>
</reference>
<reference evidence="54" key="28">
    <citation type="journal article" date="2014" name="FEBS Lett.">
        <title>PPNDS inhibits murine Norovirus RNA-dependent RNA-polymerase mimicking two RNA stacking bases.</title>
        <authorList>
            <person name="Croci R."/>
            <person name="Tarantino D."/>
            <person name="Milani M."/>
            <person name="Pezzullo M."/>
            <person name="Rohayem J."/>
            <person name="Bolognesi M."/>
            <person name="Mastrangelo E."/>
        </authorList>
    </citation>
    <scope>X-RAY CRYSTALLOGRAPHY (2.40 ANGSTROMS) OF 1181-1687 IN COMPLEX WITH PPNDS</scope>
    <scope>DISULFIDE BONDS</scope>
    <scope>CATALYTIC ACTIVITY (RNA-DIRECTED RNA POLYMERASE)</scope>
    <scope>ACTIVITY REGULATION (RNA-DIRECTED RNA POLYMERASE)</scope>
</reference>
<reference evidence="53" key="29">
    <citation type="journal article" date="2014" name="PLoS ONE">
        <title>Structural bases of norovirus RNA dependent RNA polymerase inhibition by novel suramin-related compounds.</title>
        <authorList>
            <person name="Croci R."/>
            <person name="Pezzullo M."/>
            <person name="Tarantino D."/>
            <person name="Milani M."/>
            <person name="Tsay S.C."/>
            <person name="Sureshbabu R."/>
            <person name="Tsai Y.J."/>
            <person name="Mastrangelo E."/>
            <person name="Rohayem J."/>
            <person name="Bolognesi M."/>
            <person name="Hwu J.R."/>
        </authorList>
    </citation>
    <scope>X-RAY CRYSTALLOGRAPHY (2.30 ANGSTROMS) OF 1181-1687 IN COMPLEX WITH MAGNESIUM AND SURAMIN-RELATED COMPOUNDS</scope>
    <scope>DISULFIDE BONDS</scope>
    <scope>CATALYTIC ACTIVITY (RNA-DIRECTED RNA POLYMERASE)</scope>
    <scope>ACTIVITY REGULATION (RNA-DIRECTED RNA POLYMERASE)</scope>
</reference>
<reference evidence="43 44" key="30">
    <citation type="journal article" date="2014" name="Proteins">
        <title>Murine norovirus protein NS1/2 aspartate to glutamate mutation, sufficient for persistence, reorients side chain of surface exposed tryptophan within a novel structured domain.</title>
        <authorList>
            <person name="Borin B.N."/>
            <person name="Tang W."/>
            <person name="Nice T.J."/>
            <person name="McCune B.T."/>
            <person name="Virgin H.W."/>
            <person name="Krezel A.M."/>
        </authorList>
    </citation>
    <scope>STRUCTURE BY NMR OF 28-114</scope>
    <scope>DOMAIN (NS1-2)</scope>
    <scope>MUTAGENESIS OF ASP-94</scope>
    <source>
        <strain>CR6</strain>
        <strain>CW3</strain>
    </source>
</reference>
<reference evidence="55 56" key="31">
    <citation type="journal article" date="2015" name="PeerJ">
        <title>Structure determination of Murine Norovirus NS6 proteases with C-terminal extensions designed to probe protease-substrate interactions.</title>
        <authorList>
            <person name="Fernandes H."/>
            <person name="Leen E.N."/>
            <person name="Cromwell H."/>
            <person name="Pfeil M.P."/>
            <person name="Curry S."/>
        </authorList>
    </citation>
    <scope>X-RAY CRYSTALLOGRAPHY (2.30 ANGSTROMS) OF 995-1178 AND 1174-1178</scope>
</reference>
<reference evidence="57" key="32">
    <citation type="journal article" date="2018" name="Front. Microbiol.">
        <title>Insight Into the Interaction Between RNA Polymerase and VPg for Murine Norovirus Replication.</title>
        <authorList>
            <person name="Lee J.H."/>
            <person name="Park B.S."/>
            <person name="Han K.R."/>
            <person name="Biering S.B."/>
            <person name="Kim S.J."/>
            <person name="Choi J."/>
            <person name="Seok J.H."/>
            <person name="Alam I."/>
            <person name="Chung M.S."/>
            <person name="Kim H.M."/>
            <person name="Hwang S."/>
            <person name="Kim K.H."/>
        </authorList>
    </citation>
    <scope>X-RAY CRYSTALLOGRAPHY (3.14 ANGSTROMS) OF 1181-1686 IN COMPLEX WITH THE VIRAL GENOME-LINKED PROTEIN</scope>
    <scope>SUBUNIT (RNA-DIRECTED RNA POLYMERASE)</scope>
    <scope>INTERACTION WITH RNA-DIRECTED RNA POLYMERASE (VIRAL GENOME-LINKED PROTEIN)</scope>
    <scope>INTERACTION WITH VIRAL GENOME-LINKED PROTEIN (RNA-DIRECTED RNA POLYMERASE)</scope>
    <scope>SUBUNIT (VIRAL GENOME-LINKED PROTEIN)</scope>
    <scope>MUTAGENESIS OF ASP-1508 AND LEU-1531</scope>
</reference>
<gene>
    <name type="ORF">ORF1</name>
</gene>
<name>POLG_MNV1</name>
<accession>Q80J95</accession>
<accession>Q2V8W5</accession>
<accession>S4V9Y7</accession>
<protein>
    <recommendedName>
        <fullName>Genome polyprotein</fullName>
    </recommendedName>
    <component>
        <recommendedName>
            <fullName evidence="36">NS1-2</fullName>
        </recommendedName>
        <alternativeName>
            <fullName>NS1.2</fullName>
        </alternativeName>
        <alternativeName>
            <fullName evidence="38">NS1/2</fullName>
        </alternativeName>
        <alternativeName>
            <fullName>Protein p37</fullName>
        </alternativeName>
    </component>
    <component>
        <recommendedName>
            <fullName>NS1</fullName>
        </recommendedName>
    </component>
    <component>
        <recommendedName>
            <fullName>NS2</fullName>
        </recommendedName>
    </component>
    <component>
        <recommendedName>
            <fullName>NTPase</fullName>
            <ecNumber evidence="28">3.6.1.15</ecNumber>
        </recommendedName>
        <alternativeName>
            <fullName evidence="36">NS3</fullName>
        </alternativeName>
        <alternativeName>
            <fullName>p41</fullName>
        </alternativeName>
    </component>
    <component>
        <recommendedName>
            <fullName evidence="36">NS4</fullName>
        </recommendedName>
        <alternativeName>
            <fullName>Protein p20</fullName>
        </alternativeName>
    </component>
    <component>
        <recommendedName>
            <fullName>Viral genome-linked protein</fullName>
            <shortName>VPg</shortName>
        </recommendedName>
        <alternativeName>
            <fullName evidence="36">NS5</fullName>
        </alternativeName>
    </component>
    <component>
        <recommendedName>
            <fullName>3C-like protease</fullName>
            <shortName>3CLpro</shortName>
            <ecNumber evidence="3">3.4.22.66</ecNumber>
        </recommendedName>
        <alternativeName>
            <fullName>Calicivirin</fullName>
        </alternativeName>
        <alternativeName>
            <fullName evidence="36">NS6</fullName>
        </alternativeName>
    </component>
    <component>
        <recommendedName>
            <fullName>RNA-directed RNA polymerase</fullName>
            <shortName>RdRp</shortName>
            <ecNumber evidence="13 14 16 20 21">2.7.7.48</ecNumber>
        </recommendedName>
        <alternativeName>
            <fullName evidence="36">NS7</fullName>
        </alternativeName>
    </component>
</protein>
<keyword id="KW-0002">3D-structure</keyword>
<keyword id="KW-0067">ATP-binding</keyword>
<keyword id="KW-0191">Covalent protein-RNA linkage</keyword>
<keyword id="KW-0903">Direct protein sequencing</keyword>
<keyword id="KW-1015">Disulfide bond</keyword>
<keyword id="KW-1035">Host cytoplasm</keyword>
<keyword id="KW-1038">Host endoplasmic reticulum</keyword>
<keyword id="KW-1039">Host endosome</keyword>
<keyword id="KW-1043">Host membrane</keyword>
<keyword id="KW-1045">Host mitochondrion</keyword>
<keyword id="KW-0945">Host-virus interaction</keyword>
<keyword id="KW-0378">Hydrolase</keyword>
<keyword id="KW-0460">Magnesium</keyword>
<keyword id="KW-0464">Manganese</keyword>
<keyword id="KW-0472">Membrane</keyword>
<keyword id="KW-0479">Metal-binding</keyword>
<keyword id="KW-0547">Nucleotide-binding</keyword>
<keyword id="KW-0548">Nucleotidyltransferase</keyword>
<keyword id="KW-0597">Phosphoprotein</keyword>
<keyword id="KW-0645">Protease</keyword>
<keyword id="KW-0696">RNA-directed RNA polymerase</keyword>
<keyword id="KW-0964">Secreted</keyword>
<keyword id="KW-0788">Thiol protease</keyword>
<keyword id="KW-0808">Transferase</keyword>
<keyword id="KW-0693">Viral RNA replication</keyword>
<proteinExistence type="evidence at protein level"/>
<organism>
    <name type="scientific">Norovirus (isolate Mouse/NoV/United States/MNV1/2002/GV)</name>
    <name type="common">MNV-1</name>
    <name type="synonym">Murine Norovirus 1</name>
    <dbReference type="NCBI Taxonomy" id="223997"/>
    <lineage>
        <taxon>Viruses</taxon>
        <taxon>Riboviria</taxon>
        <taxon>Orthornavirae</taxon>
        <taxon>Pisuviricota</taxon>
        <taxon>Pisoniviricetes</taxon>
        <taxon>Picornavirales</taxon>
        <taxon>Caliciviridae</taxon>
        <taxon>Norovirus</taxon>
        <taxon>Norwalk virus</taxon>
    </lineage>
</organism>